<proteinExistence type="inferred from homology"/>
<organism>
    <name type="scientific">Escherichia coli (strain K12 / MC4100 / BW2952)</name>
    <dbReference type="NCBI Taxonomy" id="595496"/>
    <lineage>
        <taxon>Bacteria</taxon>
        <taxon>Pseudomonadati</taxon>
        <taxon>Pseudomonadota</taxon>
        <taxon>Gammaproteobacteria</taxon>
        <taxon>Enterobacterales</taxon>
        <taxon>Enterobacteriaceae</taxon>
        <taxon>Escherichia</taxon>
    </lineage>
</organism>
<reference key="1">
    <citation type="journal article" date="2009" name="J. Bacteriol.">
        <title>Genomic sequencing reveals regulatory mutations and recombinational events in the widely used MC4100 lineage of Escherichia coli K-12.</title>
        <authorList>
            <person name="Ferenci T."/>
            <person name="Zhou Z."/>
            <person name="Betteridge T."/>
            <person name="Ren Y."/>
            <person name="Liu Y."/>
            <person name="Feng L."/>
            <person name="Reeves P.R."/>
            <person name="Wang L."/>
        </authorList>
    </citation>
    <scope>NUCLEOTIDE SEQUENCE [LARGE SCALE GENOMIC DNA]</scope>
    <source>
        <strain>K12 / MC4100 / BW2952</strain>
    </source>
</reference>
<name>IRAP_ECOBW</name>
<evidence type="ECO:0000255" key="1">
    <source>
        <dbReference type="HAMAP-Rule" id="MF_01198"/>
    </source>
</evidence>
<dbReference type="EMBL" id="CP001396">
    <property type="protein sequence ID" value="ACR64948.1"/>
    <property type="molecule type" value="Genomic_DNA"/>
</dbReference>
<dbReference type="RefSeq" id="WP_000792970.1">
    <property type="nucleotide sequence ID" value="NC_012759.1"/>
</dbReference>
<dbReference type="SMR" id="C4ZTE1"/>
<dbReference type="GeneID" id="93777080"/>
<dbReference type="KEGG" id="ebw:BWG_0266"/>
<dbReference type="HOGENOM" id="CLU_169517_0_0_6"/>
<dbReference type="GO" id="GO:0005737">
    <property type="term" value="C:cytoplasm"/>
    <property type="evidence" value="ECO:0007669"/>
    <property type="project" value="UniProtKB-SubCell"/>
</dbReference>
<dbReference type="GO" id="GO:0009267">
    <property type="term" value="P:cellular response to starvation"/>
    <property type="evidence" value="ECO:0007669"/>
    <property type="project" value="UniProtKB-UniRule"/>
</dbReference>
<dbReference type="HAMAP" id="MF_01198">
    <property type="entry name" value="Anti_adapt_IraP"/>
    <property type="match status" value="1"/>
</dbReference>
<dbReference type="InterPro" id="IPR019732">
    <property type="entry name" value="SigmaS_Anti-adapt_IraP"/>
</dbReference>
<dbReference type="NCBIfam" id="NF007598">
    <property type="entry name" value="PRK10244.1"/>
    <property type="match status" value="1"/>
</dbReference>
<dbReference type="Pfam" id="PF10796">
    <property type="entry name" value="Anti-adapt_IraP"/>
    <property type="match status" value="1"/>
</dbReference>
<keyword id="KW-0175">Coiled coil</keyword>
<keyword id="KW-0963">Cytoplasm</keyword>
<keyword id="KW-0346">Stress response</keyword>
<sequence length="86" mass="9937">MKNLIAELLFKLAQKEEESKELCAQVEALEIIVTAMLRNMAQNDQQRLIDQVEGALYEVKPDASIPDDDTELLRDYVKKLLKHPRQ</sequence>
<protein>
    <recommendedName>
        <fullName evidence="1">Anti-adapter protein IraP</fullName>
    </recommendedName>
</protein>
<comment type="function">
    <text evidence="1">Inhibits RpoS proteolysis by regulating RssB activity, thereby increasing the stability of the sigma stress factor RpoS especially during phosphate starvation, but also in stationary phase and during nitrogen starvation. Its effect on RpoS stability is due to its interaction with RssB, which probably blocks the interaction of RssB with RpoS, and the consequent delivery of the RssB-RpoS complex to the ClpXP protein degradation pathway.</text>
</comment>
<comment type="subunit">
    <text evidence="1">Interacts with RssB.</text>
</comment>
<comment type="subcellular location">
    <subcellularLocation>
        <location evidence="1">Cytoplasm</location>
    </subcellularLocation>
</comment>
<comment type="similarity">
    <text evidence="1">Belongs to the IraP family.</text>
</comment>
<feature type="chain" id="PRO_1000213816" description="Anti-adapter protein IraP">
    <location>
        <begin position="1"/>
        <end position="86"/>
    </location>
</feature>
<feature type="coiled-coil region" evidence="1">
    <location>
        <begin position="1"/>
        <end position="36"/>
    </location>
</feature>
<gene>
    <name evidence="1" type="primary">iraP</name>
    <name type="ordered locus">BWG_0266</name>
</gene>
<accession>C4ZTE1</accession>